<comment type="function">
    <text>Core component of nucleosome which plays a central role in DNA double strand break (DSB) repair. Nucleosomes wrap and compact DNA into chromatin, limiting DNA accessibility to the cellular machineries which require DNA as a template. Histones thereby play a central role in transcription regulation, DNA repair, DNA replication and chromosomal stability. DNA accessibility is regulated via a complex set of post-translational modifications of histones, also called histone code, and nucleosome remodeling.</text>
</comment>
<comment type="subunit">
    <text>The nucleosome is a histone octamer containing two molecules each of H2A, H2B, H3 and H4 assembled in one H3-H4 heterotetramer and two H2A-H2B heterodimers. The octamer wraps approximately 147 bp of DNA.</text>
</comment>
<comment type="subcellular location">
    <subcellularLocation>
        <location>Nucleus</location>
    </subcellularLocation>
    <subcellularLocation>
        <location>Chromosome</location>
    </subcellularLocation>
</comment>
<comment type="domain">
    <text>The [ST]-Q motif constitutes a recognition sequence for kinases from the PI3/PI4-kinase family.</text>
</comment>
<comment type="PTM">
    <text evidence="1">Phosphorylated to form H2AS128ph (gamma-H2A) in response to DNA double-strand breaks (DSBs) generated by exogenous genotoxic agents and by stalled replication forks. Phosphorylation is dependent on the DNA damage checkpoint kinases MEC1/ATR and TEL1/ATM, spreads on either side of a detected DSB site and may mark the surrounding chromatin for recruitment of proteins required for DNA damage signaling and repair. Gamma-H2A is removed from the DNA prior to the strand invasion-primer extension step of the repair process and subsequently dephosphorylated. Dephosphorylation is necessary for efficient recovery from the DNA damage checkpoint (By similarity).</text>
</comment>
<comment type="PTM">
    <text evidence="1">Acetylated by ESA1 to form H2AK4ac and H2AK7ac.</text>
</comment>
<comment type="miscellaneous">
    <text evidence="3">In contrast to vertebrates and insects, its C-terminus is not monoubiquitinated.</text>
</comment>
<comment type="similarity">
    <text evidence="3">Belongs to the histone H2A family.</text>
</comment>
<comment type="caution">
    <text evidence="3">To ensure consistency between histone entries, we follow the 'Brno' nomenclature for histone modifications, with positions referring to those used in the literature for the 'closest' model organism. Due to slight variations in histone sequences between organisms and to the presence of initiator methionine in UniProtKB/Swiss-Prot sequences, the actual positions of modified amino acids in the sequence generally differ. In this entry the following conventions are used: H2AK4ac = acetylated Lys-5; H2AK7ac = acetylated Lys-10; H2AS128ph = phosphorylated Ser-133.</text>
</comment>
<protein>
    <recommendedName>
        <fullName>Histone H2A</fullName>
    </recommendedName>
</protein>
<evidence type="ECO:0000250" key="1"/>
<evidence type="ECO:0000256" key="2">
    <source>
        <dbReference type="SAM" id="MobiDB-lite"/>
    </source>
</evidence>
<evidence type="ECO:0000305" key="3"/>
<dbReference type="EMBL" id="AJ006959">
    <property type="protein sequence ID" value="CAA07351.1"/>
    <property type="molecule type" value="Genomic_DNA"/>
</dbReference>
<dbReference type="EMBL" id="CP009806">
    <property type="protein sequence ID" value="ATZ47394.1"/>
    <property type="molecule type" value="Genomic_DNA"/>
</dbReference>
<dbReference type="RefSeq" id="XP_001550543.1">
    <property type="nucleotide sequence ID" value="XM_001550493.1"/>
</dbReference>
<dbReference type="SMR" id="O74268"/>
<dbReference type="EnsemblFungi" id="Bcin02g06800.1">
    <property type="protein sequence ID" value="Bcin02p06800.1"/>
    <property type="gene ID" value="Bcin02g06800"/>
</dbReference>
<dbReference type="GeneID" id="5431036"/>
<dbReference type="KEGG" id="bfu:BCIN_02g06800"/>
<dbReference type="VEuPathDB" id="FungiDB:Bcin02g06800"/>
<dbReference type="OMA" id="HKKTRIN"/>
<dbReference type="OrthoDB" id="9421954at2759"/>
<dbReference type="Proteomes" id="UP000001798">
    <property type="component" value="Chromosome bcin02"/>
</dbReference>
<dbReference type="GO" id="GO:0000786">
    <property type="term" value="C:nucleosome"/>
    <property type="evidence" value="ECO:0007669"/>
    <property type="project" value="UniProtKB-KW"/>
</dbReference>
<dbReference type="GO" id="GO:0005634">
    <property type="term" value="C:nucleus"/>
    <property type="evidence" value="ECO:0007669"/>
    <property type="project" value="UniProtKB-SubCell"/>
</dbReference>
<dbReference type="GO" id="GO:0003677">
    <property type="term" value="F:DNA binding"/>
    <property type="evidence" value="ECO:0007669"/>
    <property type="project" value="UniProtKB-KW"/>
</dbReference>
<dbReference type="GO" id="GO:0046982">
    <property type="term" value="F:protein heterodimerization activity"/>
    <property type="evidence" value="ECO:0007669"/>
    <property type="project" value="InterPro"/>
</dbReference>
<dbReference type="GO" id="GO:0030527">
    <property type="term" value="F:structural constituent of chromatin"/>
    <property type="evidence" value="ECO:0007669"/>
    <property type="project" value="InterPro"/>
</dbReference>
<dbReference type="GO" id="GO:0006281">
    <property type="term" value="P:DNA repair"/>
    <property type="evidence" value="ECO:0007669"/>
    <property type="project" value="UniProtKB-KW"/>
</dbReference>
<dbReference type="CDD" id="cd00074">
    <property type="entry name" value="HFD_H2A"/>
    <property type="match status" value="1"/>
</dbReference>
<dbReference type="FunFam" id="1.10.20.10:FF:000008">
    <property type="entry name" value="Histone H2A"/>
    <property type="match status" value="1"/>
</dbReference>
<dbReference type="Gene3D" id="1.10.20.10">
    <property type="entry name" value="Histone, subunit A"/>
    <property type="match status" value="1"/>
</dbReference>
<dbReference type="InterPro" id="IPR009072">
    <property type="entry name" value="Histone-fold"/>
</dbReference>
<dbReference type="InterPro" id="IPR002119">
    <property type="entry name" value="Histone_H2A"/>
</dbReference>
<dbReference type="InterPro" id="IPR007125">
    <property type="entry name" value="Histone_H2A/H2B/H3"/>
</dbReference>
<dbReference type="InterPro" id="IPR032454">
    <property type="entry name" value="Histone_H2A_C"/>
</dbReference>
<dbReference type="InterPro" id="IPR032458">
    <property type="entry name" value="Histone_H2A_CS"/>
</dbReference>
<dbReference type="PANTHER" id="PTHR23430">
    <property type="entry name" value="HISTONE H2A"/>
    <property type="match status" value="1"/>
</dbReference>
<dbReference type="Pfam" id="PF00125">
    <property type="entry name" value="Histone"/>
    <property type="match status" value="1"/>
</dbReference>
<dbReference type="Pfam" id="PF16211">
    <property type="entry name" value="Histone_H2A_C"/>
    <property type="match status" value="1"/>
</dbReference>
<dbReference type="PRINTS" id="PR00620">
    <property type="entry name" value="HISTONEH2A"/>
</dbReference>
<dbReference type="SMART" id="SM00414">
    <property type="entry name" value="H2A"/>
    <property type="match status" value="1"/>
</dbReference>
<dbReference type="SUPFAM" id="SSF47113">
    <property type="entry name" value="Histone-fold"/>
    <property type="match status" value="1"/>
</dbReference>
<dbReference type="PROSITE" id="PS00046">
    <property type="entry name" value="HISTONE_H2A"/>
    <property type="match status" value="1"/>
</dbReference>
<sequence>MTGGKSAGGKAGTTKNAQSRSSKAGLAFPVGRVHRLLRKGNYAQRVGAGAPVYLAAVLEYLAAEILELAGNAARDNKKTRIIPRHLQLAIRNDEELNKLLGHVTIAQGGVLPNIHQNLLPKKTAKTAGGKPASQEL</sequence>
<reference key="1">
    <citation type="submission" date="1998-06" db="EMBL/GenBank/DDBJ databases">
        <title>Biochemische und molekulargenetische Untersuchungen zur Saponindetoxifikation bei dem phytopathogenen Pilz Botrytis cinerea.</title>
        <authorList>
            <person name="Quidde T."/>
            <person name="Tudzynski P."/>
        </authorList>
    </citation>
    <scope>NUCLEOTIDE SEQUENCE [GENOMIC DNA]</scope>
</reference>
<reference key="2">
    <citation type="journal article" date="2011" name="PLoS Genet.">
        <title>Genomic analysis of the necrotrophic fungal pathogens Sclerotinia sclerotiorum and Botrytis cinerea.</title>
        <authorList>
            <person name="Amselem J."/>
            <person name="Cuomo C.A."/>
            <person name="van Kan J.A.L."/>
            <person name="Viaud M."/>
            <person name="Benito E.P."/>
            <person name="Couloux A."/>
            <person name="Coutinho P.M."/>
            <person name="de Vries R.P."/>
            <person name="Dyer P.S."/>
            <person name="Fillinger S."/>
            <person name="Fournier E."/>
            <person name="Gout L."/>
            <person name="Hahn M."/>
            <person name="Kohn L."/>
            <person name="Lapalu N."/>
            <person name="Plummer K.M."/>
            <person name="Pradier J.-M."/>
            <person name="Quevillon E."/>
            <person name="Sharon A."/>
            <person name="Simon A."/>
            <person name="ten Have A."/>
            <person name="Tudzynski B."/>
            <person name="Tudzynski P."/>
            <person name="Wincker P."/>
            <person name="Andrew M."/>
            <person name="Anthouard V."/>
            <person name="Beever R.E."/>
            <person name="Beffa R."/>
            <person name="Benoit I."/>
            <person name="Bouzid O."/>
            <person name="Brault B."/>
            <person name="Chen Z."/>
            <person name="Choquer M."/>
            <person name="Collemare J."/>
            <person name="Cotton P."/>
            <person name="Danchin E.G."/>
            <person name="Da Silva C."/>
            <person name="Gautier A."/>
            <person name="Giraud C."/>
            <person name="Giraud T."/>
            <person name="Gonzalez C."/>
            <person name="Grossetete S."/>
            <person name="Gueldener U."/>
            <person name="Henrissat B."/>
            <person name="Howlett B.J."/>
            <person name="Kodira C."/>
            <person name="Kretschmer M."/>
            <person name="Lappartient A."/>
            <person name="Leroch M."/>
            <person name="Levis C."/>
            <person name="Mauceli E."/>
            <person name="Neuveglise C."/>
            <person name="Oeser B."/>
            <person name="Pearson M."/>
            <person name="Poulain J."/>
            <person name="Poussereau N."/>
            <person name="Quesneville H."/>
            <person name="Rascle C."/>
            <person name="Schumacher J."/>
            <person name="Segurens B."/>
            <person name="Sexton A."/>
            <person name="Silva E."/>
            <person name="Sirven C."/>
            <person name="Soanes D.M."/>
            <person name="Talbot N.J."/>
            <person name="Templeton M."/>
            <person name="Yandava C."/>
            <person name="Yarden O."/>
            <person name="Zeng Q."/>
            <person name="Rollins J.A."/>
            <person name="Lebrun M.-H."/>
            <person name="Dickman M."/>
        </authorList>
    </citation>
    <scope>NUCLEOTIDE SEQUENCE [LARGE SCALE GENOMIC DNA]</scope>
    <source>
        <strain>B05.10</strain>
    </source>
</reference>
<reference key="3">
    <citation type="journal article" date="2012" name="Eukaryot. Cell">
        <title>Genome update of Botrytis cinerea strains B05.10 and T4.</title>
        <authorList>
            <person name="Staats M."/>
            <person name="van Kan J.A.L."/>
        </authorList>
    </citation>
    <scope>NUCLEOTIDE SEQUENCE [LARGE SCALE GENOMIC DNA]</scope>
    <scope>GENOME REANNOTATION</scope>
    <source>
        <strain>B05.10</strain>
    </source>
</reference>
<reference key="4">
    <citation type="journal article" date="2017" name="Mol. Plant Pathol.">
        <title>A gapless genome sequence of the fungus Botrytis cinerea.</title>
        <authorList>
            <person name="van Kan J.A.L."/>
            <person name="Stassen J.H.M."/>
            <person name="Mosbach A."/>
            <person name="van der Lee T.A.J."/>
            <person name="Faino L."/>
            <person name="Farmer A.D."/>
            <person name="Papasotiriou D.G."/>
            <person name="Zhou S."/>
            <person name="Seidl M.F."/>
            <person name="Cottam E."/>
            <person name="Edel D."/>
            <person name="Hahn M."/>
            <person name="Schwartz D.C."/>
            <person name="Dietrich R.A."/>
            <person name="Widdison S."/>
            <person name="Scalliet G."/>
        </authorList>
    </citation>
    <scope>NUCLEOTIDE SEQUENCE [LARGE SCALE GENOMIC DNA]</scope>
    <scope>GENOME REANNOTATION</scope>
    <source>
        <strain>B05.10</strain>
    </source>
</reference>
<proteinExistence type="inferred from homology"/>
<organism>
    <name type="scientific">Botryotinia fuckeliana (strain B05.10)</name>
    <name type="common">Noble rot fungus</name>
    <name type="synonym">Botrytis cinerea</name>
    <dbReference type="NCBI Taxonomy" id="332648"/>
    <lineage>
        <taxon>Eukaryota</taxon>
        <taxon>Fungi</taxon>
        <taxon>Dikarya</taxon>
        <taxon>Ascomycota</taxon>
        <taxon>Pezizomycotina</taxon>
        <taxon>Leotiomycetes</taxon>
        <taxon>Helotiales</taxon>
        <taxon>Sclerotiniaceae</taxon>
        <taxon>Botrytis</taxon>
    </lineage>
</organism>
<keyword id="KW-0007">Acetylation</keyword>
<keyword id="KW-0158">Chromosome</keyword>
<keyword id="KW-0227">DNA damage</keyword>
<keyword id="KW-0234">DNA repair</keyword>
<keyword id="KW-0238">DNA-binding</keyword>
<keyword id="KW-0488">Methylation</keyword>
<keyword id="KW-0544">Nucleosome core</keyword>
<keyword id="KW-0539">Nucleus</keyword>
<keyword id="KW-0597">Phosphoprotein</keyword>
<keyword id="KW-1185">Reference proteome</keyword>
<name>H2A_BOTFB</name>
<feature type="initiator methionine" description="Removed" evidence="1">
    <location>
        <position position="1"/>
    </location>
</feature>
<feature type="chain" id="PRO_0000055209" description="Histone H2A">
    <location>
        <begin position="2"/>
        <end position="136"/>
    </location>
</feature>
<feature type="region of interest" description="Disordered" evidence="2">
    <location>
        <begin position="1"/>
        <end position="23"/>
    </location>
</feature>
<feature type="short sequence motif" description="[ST]-Q motif">
    <location>
        <begin position="133"/>
        <end position="134"/>
    </location>
</feature>
<feature type="compositionally biased region" description="Gly residues" evidence="2">
    <location>
        <begin position="1"/>
        <end position="11"/>
    </location>
</feature>
<feature type="site" description="Not ubiquitinated" evidence="3">
    <location>
        <position position="121"/>
    </location>
</feature>
<feature type="modified residue" description="N6-acetyllysine" evidence="1">
    <location>
        <position position="5"/>
    </location>
</feature>
<feature type="modified residue" description="N6-acetyllysine" evidence="1">
    <location>
        <position position="10"/>
    </location>
</feature>
<feature type="modified residue" description="N5-methylglutamine" evidence="1">
    <location>
        <position position="107"/>
    </location>
</feature>
<feature type="modified residue" description="Phosphoserine" evidence="1">
    <location>
        <position position="133"/>
    </location>
</feature>
<feature type="sequence conflict" description="In Ref. 1; CAA07351." evidence="3" ref="1">
    <original>SS</original>
    <variation>FHP</variation>
    <location>
        <begin position="21"/>
        <end position="22"/>
    </location>
</feature>
<feature type="sequence conflict" description="In Ref. 1; CAA07351." evidence="3" ref="1">
    <original>N</original>
    <variation>S</variation>
    <location>
        <position position="117"/>
    </location>
</feature>
<accession>O74268</accession>
<accession>A0A384JAQ7</accession>
<accession>A6SDP9</accession>
<gene>
    <name type="primary">hta1</name>
    <name type="ORF">BC1G_11316</name>
    <name type="ORF">BCIN_02g06800</name>
</gene>